<keyword id="KW-0002">3D-structure</keyword>
<keyword id="KW-0067">ATP-binding</keyword>
<keyword id="KW-0131">Cell cycle</keyword>
<keyword id="KW-0132">Cell division</keyword>
<keyword id="KW-0997">Cell inner membrane</keyword>
<keyword id="KW-1003">Cell membrane</keyword>
<keyword id="KW-0159">Chromosome partition</keyword>
<keyword id="KW-0238">DNA-binding</keyword>
<keyword id="KW-0472">Membrane</keyword>
<keyword id="KW-0547">Nucleotide-binding</keyword>
<keyword id="KW-1185">Reference proteome</keyword>
<keyword id="KW-0812">Transmembrane</keyword>
<keyword id="KW-1133">Transmembrane helix</keyword>
<dbReference type="EMBL" id="Z49932">
    <property type="protein sequence ID" value="CAA90178.1"/>
    <property type="molecule type" value="Genomic_DNA"/>
</dbReference>
<dbReference type="EMBL" id="U00096">
    <property type="protein sequence ID" value="AAC73976.1"/>
    <property type="molecule type" value="Genomic_DNA"/>
</dbReference>
<dbReference type="EMBL" id="AP009048">
    <property type="protein sequence ID" value="BAA35615.1"/>
    <property type="molecule type" value="Genomic_DNA"/>
</dbReference>
<dbReference type="PIR" id="A64828">
    <property type="entry name" value="A64828"/>
</dbReference>
<dbReference type="RefSeq" id="NP_415410.1">
    <property type="nucleotide sequence ID" value="NC_000913.3"/>
</dbReference>
<dbReference type="RefSeq" id="WP_000076967.1">
    <property type="nucleotide sequence ID" value="NZ_LN832404.1"/>
</dbReference>
<dbReference type="PDB" id="2IUS">
    <property type="method" value="X-ray"/>
    <property type="resolution" value="2.70 A"/>
    <property type="chains" value="A/B/C/D/E/F=818-1329"/>
</dbReference>
<dbReference type="PDB" id="2J5P">
    <property type="method" value="NMR"/>
    <property type="chains" value="A=1261-1329"/>
</dbReference>
<dbReference type="PDB" id="5DCF">
    <property type="method" value="X-ray"/>
    <property type="resolution" value="2.30 A"/>
    <property type="chains" value="A=1261-1329"/>
</dbReference>
<dbReference type="PDBsum" id="2IUS"/>
<dbReference type="PDBsum" id="2J5P"/>
<dbReference type="PDBsum" id="5DCF"/>
<dbReference type="SMR" id="P46889"/>
<dbReference type="BioGRID" id="4260652">
    <property type="interactions" value="499"/>
</dbReference>
<dbReference type="ComplexPortal" id="CPX-1936">
    <property type="entry name" value="Divisome complex"/>
</dbReference>
<dbReference type="DIP" id="DIP-9703N"/>
<dbReference type="FunCoup" id="P46889">
    <property type="interactions" value="203"/>
</dbReference>
<dbReference type="IntAct" id="P46889">
    <property type="interactions" value="7"/>
</dbReference>
<dbReference type="STRING" id="511145.b0890"/>
<dbReference type="TCDB" id="3.A.12.1.2">
    <property type="family name" value="the septal dna translocator (s-dna-t) family"/>
</dbReference>
<dbReference type="jPOST" id="P46889"/>
<dbReference type="PaxDb" id="511145-b0890"/>
<dbReference type="EnsemblBacteria" id="AAC73976">
    <property type="protein sequence ID" value="AAC73976"/>
    <property type="gene ID" value="b0890"/>
</dbReference>
<dbReference type="GeneID" id="945102"/>
<dbReference type="KEGG" id="ecj:JW0873"/>
<dbReference type="KEGG" id="eco:b0890"/>
<dbReference type="KEGG" id="ecoc:C3026_05510"/>
<dbReference type="PATRIC" id="fig|511145.12.peg.920"/>
<dbReference type="EchoBASE" id="EB3016"/>
<dbReference type="eggNOG" id="COG1178">
    <property type="taxonomic scope" value="Bacteria"/>
</dbReference>
<dbReference type="eggNOG" id="COG1674">
    <property type="taxonomic scope" value="Bacteria"/>
</dbReference>
<dbReference type="HOGENOM" id="CLU_001981_0_1_6"/>
<dbReference type="InParanoid" id="P46889"/>
<dbReference type="OMA" id="DPFWKPG"/>
<dbReference type="OrthoDB" id="9807790at2"/>
<dbReference type="PhylomeDB" id="P46889"/>
<dbReference type="BioCyc" id="EcoCyc:G6464-MONOMER"/>
<dbReference type="EvolutionaryTrace" id="P46889"/>
<dbReference type="PRO" id="PR:P46889"/>
<dbReference type="Proteomes" id="UP000000625">
    <property type="component" value="Chromosome"/>
</dbReference>
<dbReference type="GO" id="GO:0032153">
    <property type="term" value="C:cell division site"/>
    <property type="evidence" value="ECO:0000303"/>
    <property type="project" value="ComplexPortal"/>
</dbReference>
<dbReference type="GO" id="GO:1990586">
    <property type="term" value="C:divisome complex"/>
    <property type="evidence" value="ECO:0000303"/>
    <property type="project" value="ComplexPortal"/>
</dbReference>
<dbReference type="GO" id="GO:0016020">
    <property type="term" value="C:membrane"/>
    <property type="evidence" value="ECO:0000314"/>
    <property type="project" value="EcoliWiki"/>
</dbReference>
<dbReference type="GO" id="GO:0005886">
    <property type="term" value="C:plasma membrane"/>
    <property type="evidence" value="ECO:0000314"/>
    <property type="project" value="EcoCyc"/>
</dbReference>
<dbReference type="GO" id="GO:0005524">
    <property type="term" value="F:ATP binding"/>
    <property type="evidence" value="ECO:0007669"/>
    <property type="project" value="UniProtKB-KW"/>
</dbReference>
<dbReference type="GO" id="GO:0016887">
    <property type="term" value="F:ATP hydrolysis activity"/>
    <property type="evidence" value="ECO:0000314"/>
    <property type="project" value="CACAO"/>
</dbReference>
<dbReference type="GO" id="GO:0003677">
    <property type="term" value="F:DNA binding"/>
    <property type="evidence" value="ECO:0000314"/>
    <property type="project" value="EcoliWiki"/>
</dbReference>
<dbReference type="GO" id="GO:0015616">
    <property type="term" value="F:DNA translocase activity"/>
    <property type="evidence" value="ECO:0000314"/>
    <property type="project" value="EcoCyc"/>
</dbReference>
<dbReference type="GO" id="GO:0036121">
    <property type="term" value="F:double-stranded DNA helicase activity"/>
    <property type="evidence" value="ECO:0000315"/>
    <property type="project" value="CACAO"/>
</dbReference>
<dbReference type="GO" id="GO:0042802">
    <property type="term" value="F:identical protein binding"/>
    <property type="evidence" value="ECO:0000314"/>
    <property type="project" value="EcoCyc"/>
</dbReference>
<dbReference type="GO" id="GO:0043565">
    <property type="term" value="F:sequence-specific DNA binding"/>
    <property type="evidence" value="ECO:0000314"/>
    <property type="project" value="EcoCyc"/>
</dbReference>
<dbReference type="GO" id="GO:0051301">
    <property type="term" value="P:cell division"/>
    <property type="evidence" value="ECO:0000315"/>
    <property type="project" value="CACAO"/>
</dbReference>
<dbReference type="GO" id="GO:0071236">
    <property type="term" value="P:cellular response to antibiotic"/>
    <property type="evidence" value="ECO:0000315"/>
    <property type="project" value="EcoliWiki"/>
</dbReference>
<dbReference type="GO" id="GO:0007059">
    <property type="term" value="P:chromosome segregation"/>
    <property type="evidence" value="ECO:0000314"/>
    <property type="project" value="EcoliWiki"/>
</dbReference>
<dbReference type="GO" id="GO:0000917">
    <property type="term" value="P:division septum assembly"/>
    <property type="evidence" value="ECO:0000303"/>
    <property type="project" value="ComplexPortal"/>
</dbReference>
<dbReference type="GO" id="GO:0043093">
    <property type="term" value="P:FtsZ-dependent cytokinesis"/>
    <property type="evidence" value="ECO:0000303"/>
    <property type="project" value="ComplexPortal"/>
</dbReference>
<dbReference type="GO" id="GO:0045893">
    <property type="term" value="P:positive regulation of DNA-templated transcription"/>
    <property type="evidence" value="ECO:0000315"/>
    <property type="project" value="EcoliWiki"/>
</dbReference>
<dbReference type="GO" id="GO:0006970">
    <property type="term" value="P:response to osmotic stress"/>
    <property type="evidence" value="ECO:0000315"/>
    <property type="project" value="EcoliWiki"/>
</dbReference>
<dbReference type="GO" id="GO:0009651">
    <property type="term" value="P:response to salt stress"/>
    <property type="evidence" value="ECO:0000315"/>
    <property type="project" value="EcoliWiki"/>
</dbReference>
<dbReference type="GO" id="GO:0000920">
    <property type="term" value="P:septum digestion after cytokinesis"/>
    <property type="evidence" value="ECO:0000315"/>
    <property type="project" value="EcoliWiki"/>
</dbReference>
<dbReference type="CDD" id="cd01127">
    <property type="entry name" value="TrwB_TraG_TraD_VirD4"/>
    <property type="match status" value="1"/>
</dbReference>
<dbReference type="FunFam" id="3.40.50.300:FF:000209">
    <property type="entry name" value="Cell division protein FtsK"/>
    <property type="match status" value="1"/>
</dbReference>
<dbReference type="FunFam" id="1.10.10.10:FF:000268">
    <property type="entry name" value="DNA translocase FtsK"/>
    <property type="match status" value="1"/>
</dbReference>
<dbReference type="FunFam" id="3.30.980.40:FF:000001">
    <property type="entry name" value="DNA translocase FtsK"/>
    <property type="match status" value="1"/>
</dbReference>
<dbReference type="Gene3D" id="3.30.980.40">
    <property type="match status" value="1"/>
</dbReference>
<dbReference type="Gene3D" id="3.40.50.300">
    <property type="entry name" value="P-loop containing nucleotide triphosphate hydrolases"/>
    <property type="match status" value="1"/>
</dbReference>
<dbReference type="Gene3D" id="1.10.10.10">
    <property type="entry name" value="Winged helix-like DNA-binding domain superfamily/Winged helix DNA-binding domain"/>
    <property type="match status" value="1"/>
</dbReference>
<dbReference type="InterPro" id="IPR050206">
    <property type="entry name" value="FtsK/SpoIIIE/SftA"/>
</dbReference>
<dbReference type="InterPro" id="IPR025199">
    <property type="entry name" value="FtsK_4TM"/>
</dbReference>
<dbReference type="InterPro" id="IPR041027">
    <property type="entry name" value="FtsK_alpha"/>
</dbReference>
<dbReference type="InterPro" id="IPR002543">
    <property type="entry name" value="FtsK_dom"/>
</dbReference>
<dbReference type="InterPro" id="IPR018541">
    <property type="entry name" value="Ftsk_gamma"/>
</dbReference>
<dbReference type="InterPro" id="IPR027417">
    <property type="entry name" value="P-loop_NTPase"/>
</dbReference>
<dbReference type="InterPro" id="IPR036388">
    <property type="entry name" value="WH-like_DNA-bd_sf"/>
</dbReference>
<dbReference type="InterPro" id="IPR036390">
    <property type="entry name" value="WH_DNA-bd_sf"/>
</dbReference>
<dbReference type="NCBIfam" id="NF007615">
    <property type="entry name" value="PRK10263.1"/>
    <property type="match status" value="1"/>
</dbReference>
<dbReference type="PANTHER" id="PTHR22683:SF41">
    <property type="entry name" value="DNA TRANSLOCASE FTSK"/>
    <property type="match status" value="1"/>
</dbReference>
<dbReference type="PANTHER" id="PTHR22683">
    <property type="entry name" value="SPORULATION PROTEIN RELATED"/>
    <property type="match status" value="1"/>
</dbReference>
<dbReference type="Pfam" id="PF13491">
    <property type="entry name" value="FtsK_4TM"/>
    <property type="match status" value="1"/>
</dbReference>
<dbReference type="Pfam" id="PF17854">
    <property type="entry name" value="FtsK_alpha"/>
    <property type="match status" value="1"/>
</dbReference>
<dbReference type="Pfam" id="PF09397">
    <property type="entry name" value="FtsK_gamma"/>
    <property type="match status" value="1"/>
</dbReference>
<dbReference type="Pfam" id="PF01580">
    <property type="entry name" value="FtsK_SpoIIIE"/>
    <property type="match status" value="1"/>
</dbReference>
<dbReference type="SMART" id="SM00843">
    <property type="entry name" value="Ftsk_gamma"/>
    <property type="match status" value="1"/>
</dbReference>
<dbReference type="SUPFAM" id="SSF52540">
    <property type="entry name" value="P-loop containing nucleoside triphosphate hydrolases"/>
    <property type="match status" value="1"/>
</dbReference>
<dbReference type="SUPFAM" id="SSF46785">
    <property type="entry name" value="Winged helix' DNA-binding domain"/>
    <property type="match status" value="1"/>
</dbReference>
<dbReference type="PROSITE" id="PS50901">
    <property type="entry name" value="FTSK"/>
    <property type="match status" value="1"/>
</dbReference>
<proteinExistence type="evidence at protein level"/>
<protein>
    <recommendedName>
        <fullName>DNA translocase FtsK</fullName>
    </recommendedName>
</protein>
<gene>
    <name type="primary">ftsK</name>
    <name type="ordered locus">b0890</name>
    <name type="ordered locus">JW0873</name>
</gene>
<name>FTSK_ECOLI</name>
<reference key="1">
    <citation type="journal article" date="1995" name="J. Bacteriol.">
        <title>A new Escherichia coli cell division gene, ftsK.</title>
        <authorList>
            <person name="Begg K.J."/>
            <person name="Dewar S.J."/>
            <person name="Donachie W.D."/>
        </authorList>
    </citation>
    <scope>NUCLEOTIDE SEQUENCE [GENOMIC DNA]</scope>
    <scope>MUTANT TOE44</scope>
    <source>
        <strain>K12</strain>
    </source>
</reference>
<reference key="2">
    <citation type="journal article" date="1996" name="DNA Res.">
        <title>A 718-kb DNA sequence of the Escherichia coli K-12 genome corresponding to the 12.7-28.0 min region on the linkage map.</title>
        <authorList>
            <person name="Oshima T."/>
            <person name="Aiba H."/>
            <person name="Baba T."/>
            <person name="Fujita K."/>
            <person name="Hayashi K."/>
            <person name="Honjo A."/>
            <person name="Ikemoto K."/>
            <person name="Inada T."/>
            <person name="Itoh T."/>
            <person name="Kajihara M."/>
            <person name="Kanai K."/>
            <person name="Kashimoto K."/>
            <person name="Kimura S."/>
            <person name="Kitagawa M."/>
            <person name="Makino K."/>
            <person name="Masuda S."/>
            <person name="Miki T."/>
            <person name="Mizobuchi K."/>
            <person name="Mori H."/>
            <person name="Motomura K."/>
            <person name="Nakamura Y."/>
            <person name="Nashimoto H."/>
            <person name="Nishio Y."/>
            <person name="Saito N."/>
            <person name="Sampei G."/>
            <person name="Seki Y."/>
            <person name="Tagami H."/>
            <person name="Takemoto K."/>
            <person name="Wada C."/>
            <person name="Yamamoto Y."/>
            <person name="Yano M."/>
            <person name="Horiuchi T."/>
        </authorList>
    </citation>
    <scope>NUCLEOTIDE SEQUENCE [LARGE SCALE GENOMIC DNA]</scope>
    <source>
        <strain>K12 / W3110 / ATCC 27325 / DSM 5911</strain>
    </source>
</reference>
<reference key="3">
    <citation type="journal article" date="1997" name="Science">
        <title>The complete genome sequence of Escherichia coli K-12.</title>
        <authorList>
            <person name="Blattner F.R."/>
            <person name="Plunkett G. III"/>
            <person name="Bloch C.A."/>
            <person name="Perna N.T."/>
            <person name="Burland V."/>
            <person name="Riley M."/>
            <person name="Collado-Vides J."/>
            <person name="Glasner J.D."/>
            <person name="Rode C.K."/>
            <person name="Mayhew G.F."/>
            <person name="Gregor J."/>
            <person name="Davis N.W."/>
            <person name="Kirkpatrick H.A."/>
            <person name="Goeden M.A."/>
            <person name="Rose D.J."/>
            <person name="Mau B."/>
            <person name="Shao Y."/>
        </authorList>
    </citation>
    <scope>NUCLEOTIDE SEQUENCE [LARGE SCALE GENOMIC DNA]</scope>
    <source>
        <strain>K12 / MG1655 / ATCC 47076</strain>
    </source>
</reference>
<reference key="4">
    <citation type="journal article" date="2006" name="Mol. Syst. Biol.">
        <title>Highly accurate genome sequences of Escherichia coli K-12 strains MG1655 and W3110.</title>
        <authorList>
            <person name="Hayashi K."/>
            <person name="Morooka N."/>
            <person name="Yamamoto Y."/>
            <person name="Fujita K."/>
            <person name="Isono K."/>
            <person name="Choi S."/>
            <person name="Ohtsubo E."/>
            <person name="Baba T."/>
            <person name="Wanner B.L."/>
            <person name="Mori H."/>
            <person name="Horiuchi T."/>
        </authorList>
    </citation>
    <scope>NUCLEOTIDE SEQUENCE [LARGE SCALE GENOMIC DNA]</scope>
    <source>
        <strain>K12 / W3110 / ATCC 27325 / DSM 5911</strain>
    </source>
</reference>
<reference key="5">
    <citation type="journal article" date="1998" name="J. Bacteriol.">
        <title>Role of the C terminus of FtsK in Escherichia coli chromosome segregation.</title>
        <authorList>
            <person name="Yu X.C."/>
            <person name="Weihe E.K."/>
            <person name="Margolin W."/>
        </authorList>
    </citation>
    <scope>FUNCTION IN CHROMOSOME SEGREGATION</scope>
    <scope>DOMAIN</scope>
</reference>
<reference key="6">
    <citation type="journal article" date="1998" name="Mol. Microbiol.">
        <title>FtsK is an essential cell division protein that is localized to the septum and induced as part of the SOS response.</title>
        <authorList>
            <person name="Wang L."/>
            <person name="Lutkenhaus J."/>
        </authorList>
    </citation>
    <scope>FUNCTION IN CELL DIVISION</scope>
    <scope>SUBCELLULAR LOCATION</scope>
    <scope>INDUCTION</scope>
    <source>
        <strain>K12</strain>
    </source>
</reference>
<reference key="7">
    <citation type="journal article" date="2000" name="FEBS Lett.">
        <title>Membrane topology of the N-terminus of the Escherichia coli FtsK division protein.</title>
        <authorList>
            <person name="Dorazi R."/>
            <person name="Dewar S.J."/>
        </authorList>
    </citation>
    <scope>MUTAGENESIS OF GLU-58</scope>
    <scope>TOPOLOGY</scope>
</reference>
<reference key="8">
    <citation type="journal article" date="2001" name="Mol. Microbiol.">
        <title>FtsQ, FtsL and FtsI require FtsK, but not FtsN, for co-localization with FtsZ during Escherichia coli cell division.</title>
        <authorList>
            <person name="Chen J.C."/>
            <person name="Beckwith J."/>
        </authorList>
    </citation>
    <scope>FUNCTION</scope>
    <scope>SUBCELLULAR LOCATION</scope>
</reference>
<reference key="9">
    <citation type="journal article" date="2002" name="J. Bacteriol.">
        <title>ZipA is required for recruitment of FtsK, FtsQ, FtsL, and FtsN to the septal ring in Escherichia coli.</title>
        <authorList>
            <person name="Hale C.A."/>
            <person name="de Boer P.A.J."/>
        </authorList>
    </citation>
    <scope>SUBCELLULAR LOCATION</scope>
</reference>
<reference key="10">
    <citation type="journal article" date="2002" name="Cell">
        <title>FtsK is a DNA motor protein that activates chromosome dimer resolution by switching the catalytic state of the XerC and XerD recombinases.</title>
        <authorList>
            <person name="Aussel L."/>
            <person name="Barre F.-X."/>
            <person name="Aroyo M."/>
            <person name="Stasiak A."/>
            <person name="Stasiak A.Z."/>
            <person name="Sherratt D.J."/>
        </authorList>
    </citation>
    <scope>FUNCTION</scope>
    <scope>HEXAMERIZATION</scope>
    <scope>FUNCTION IN REGULATION OF XERC AND XERD</scope>
</reference>
<reference key="11">
    <citation type="journal article" date="2004" name="Mol. Microbiol.">
        <title>FtsK activities in Xer recombination, DNA mobilization and cell division involve overlapping and separate domains of the protein.</title>
        <authorList>
            <person name="Bigot S."/>
            <person name="Corre J."/>
            <person name="Louarn J.M."/>
            <person name="Cornet F."/>
            <person name="Barre F.X."/>
        </authorList>
    </citation>
    <scope>FUNCTION</scope>
    <scope>DOMAIN</scope>
    <scope>MUTAGENESIS OF LYS-997</scope>
</reference>
<reference key="12">
    <citation type="journal article" date="2005" name="Science">
        <title>Global topology analysis of the Escherichia coli inner membrane proteome.</title>
        <authorList>
            <person name="Daley D.O."/>
            <person name="Rapp M."/>
            <person name="Granseth E."/>
            <person name="Melen K."/>
            <person name="Drew D."/>
            <person name="von Heijne G."/>
        </authorList>
    </citation>
    <scope>SUBCELLULAR LOCATION</scope>
    <source>
        <strain>K12 / MG1655 / ATCC 47076</strain>
    </source>
</reference>
<reference key="13">
    <citation type="journal article" date="2006" name="Mol. Microbiol.">
        <title>Dissection of a functional interaction between the DNA translocase, FtsK, and the XerD recombinase.</title>
        <authorList>
            <person name="Yates J."/>
            <person name="Zhekov I."/>
            <person name="Baker R."/>
            <person name="Eklund B."/>
            <person name="Sherratt D.J."/>
            <person name="Arciszewska L.K."/>
        </authorList>
    </citation>
    <scope>FUNCTION</scope>
    <scope>DOMAIN</scope>
    <scope>INTERACTION WITH XERD</scope>
    <source>
        <strain>K12 / AB1157</strain>
    </source>
</reference>
<reference key="14">
    <citation type="journal article" date="2007" name="Microbiology">
        <title>Three functional subdomains of the Escherichia coli FtsQ protein are involved in its interaction with the other division proteins.</title>
        <authorList>
            <person name="D'Ulisse V."/>
            <person name="Fagioli M."/>
            <person name="Ghelardini P."/>
            <person name="Paolozzi L."/>
        </authorList>
    </citation>
    <scope>INTERACTION WITH FTSQ</scope>
    <source>
        <strain>K12</strain>
    </source>
</reference>
<reference key="15">
    <citation type="journal article" date="2007" name="Mol. Microbiol.">
        <title>FtsK, a literate chromosome segregation machine.</title>
        <authorList>
            <person name="Bigot S."/>
            <person name="Sivanathan V."/>
            <person name="Possoz C."/>
            <person name="Barre F.X."/>
            <person name="Cornet F."/>
        </authorList>
    </citation>
    <scope>REVIEW</scope>
</reference>
<reference key="16">
    <citation type="journal article" date="2008" name="FEMS Microbiol. Lett.">
        <title>The Escherichia coli FtsK functional domains involved in its interaction with its divisome protein partners.</title>
        <authorList>
            <person name="Grenga L."/>
            <person name="Luzi G."/>
            <person name="Paolozzi L."/>
            <person name="Ghelardini P."/>
        </authorList>
    </citation>
    <scope>INTERACTION WITH FTSZ; FTSQ; FTSL AND FTSI</scope>
    <source>
        <strain>K12</strain>
    </source>
</reference>
<reference key="17">
    <citation type="journal article" date="2008" name="Mol. Microbiol.">
        <title>Delayed activation of Xer recombination at dif by FtsK during septum assembly in Escherichia coli.</title>
        <authorList>
            <person name="Kennedy S.P."/>
            <person name="Chevalier F."/>
            <person name="Barre F.X."/>
        </authorList>
    </citation>
    <scope>FUNCTION</scope>
</reference>
<reference key="18">
    <citation type="journal article" date="2009" name="Nucleic Acids Res.">
        <title>Asymmetric DNA requirements in Xer recombination activation by FtsK.</title>
        <authorList>
            <person name="Bonne L."/>
            <person name="Bigot S."/>
            <person name="Chevalier F."/>
            <person name="Allemand J.F."/>
            <person name="Barre F.X."/>
        </authorList>
    </citation>
    <scope>FUNCTION</scope>
    <scope>DOMAIN</scope>
</reference>
<reference key="19">
    <citation type="journal article" date="2010" name="Mol. Microbiol.">
        <title>Multiple regions along the Escherichia coli FtsK protein are implicated in cell division.</title>
        <authorList>
            <person name="Dubarry N."/>
            <person name="Possoz C."/>
            <person name="Barre F.X."/>
        </authorList>
    </citation>
    <scope>DOMAIN</scope>
    <source>
        <strain>K12 / AB1157</strain>
    </source>
</reference>
<reference key="20">
    <citation type="journal article" date="2010" name="Nucleic Acids Res.">
        <title>FtsK translocation on DNA stops at XerCD-dif.</title>
        <authorList>
            <person name="Graham J.E."/>
            <person name="Sivanathan V."/>
            <person name="Sherratt D.J."/>
            <person name="Arciszewska L.K."/>
        </authorList>
    </citation>
    <scope>FUNCTION</scope>
</reference>
<reference key="21">
    <citation type="journal article" date="2010" name="Nucleic Acids Res.">
        <title>DNA chirality-dependent stimulation of topoisomerase IV activity by the C-terminal AAA+ domain of FtsK.</title>
        <authorList>
            <person name="Bigot S."/>
            <person name="Marians K.J."/>
        </authorList>
    </citation>
    <scope>FUNCTION</scope>
</reference>
<reference key="22">
    <citation type="journal article" date="2010" name="Biochem. Soc. Trans.">
        <title>The Escherichia coli DNA translocase FtsK.</title>
        <authorList>
            <person name="Sherratt D.J."/>
            <person name="Arciszewska L.K."/>
            <person name="Crozat E."/>
            <person name="Graham J.E."/>
            <person name="Grainge I."/>
        </authorList>
    </citation>
    <scope>REVIEW</scope>
</reference>
<reference key="23">
    <citation type="journal article" date="2010" name="ChemBioChem">
        <title>FtsK DNA translocase: the fast motor that knows where it's going.</title>
        <authorList>
            <person name="Crozat E."/>
            <person name="Grainge I."/>
        </authorList>
    </citation>
    <scope>REVIEW</scope>
</reference>
<reference key="24">
    <citation type="journal article" date="2011" name="Nucleic Acids Res.">
        <title>Activation of XerCD-dif recombination by the FtsK DNA translocase.</title>
        <authorList>
            <person name="Grainge I."/>
            <person name="Lesterlin C."/>
            <person name="Sherratt D.J."/>
        </authorList>
    </citation>
    <scope>FUNCTION</scope>
    <scope>DOMAIN</scope>
</reference>
<reference key="25">
    <citation type="journal article" date="2014" name="J. Biol. Chem.">
        <title>Site-directed fluorescence labeling reveals a revised N-terminal membrane topology and functional periplasmic residues in the Escherichia coli cell division protein FtsK.</title>
        <authorList>
            <person name="Berezuk A.M."/>
            <person name="Goodyear M."/>
            <person name="Khursigara C.M."/>
        </authorList>
    </citation>
    <scope>SUBCELLULAR LOCATION</scope>
    <scope>TOPOLOGY</scope>
    <scope>MUTAGENESIS OF ASP-135; ASP-136; ILE-137 AND TRP-138</scope>
    <source>
        <strain>K12 / W3110 / ATCC 27325 / DSM 5911</strain>
    </source>
</reference>
<reference key="26">
    <citation type="journal article" date="2006" name="Mol. Cell">
        <title>Double-stranded DNA translocation: structure and mechanism of hexameric FtsK.</title>
        <authorList>
            <person name="Massey T.H."/>
            <person name="Mercogliano C.P."/>
            <person name="Yates J."/>
            <person name="Sherratt D.J."/>
            <person name="Lowe J."/>
        </authorList>
    </citation>
    <scope>X-RAY CRYSTALLOGRAPHY (2.7 ANGSTROMS) OF 818-1329</scope>
    <scope>SUBUNIT</scope>
</reference>
<reference key="27">
    <citation type="journal article" date="2006" name="Nat. Struct. Mol. Biol.">
        <title>The FtsK gamma domain directs oriented DNA translocation by interacting with KOPS.</title>
        <authorList>
            <person name="Sivanathan V."/>
            <person name="Allen M.D."/>
            <person name="de Bekker C."/>
            <person name="Baker R."/>
            <person name="Arciszewska L.K."/>
            <person name="Freund S.M."/>
            <person name="Bycroft M."/>
            <person name="Lowe J."/>
            <person name="Sherratt D.J."/>
        </authorList>
    </citation>
    <scope>STRUCTURE BY NMR OF 1261-1329</scope>
    <scope>DNA-BINDING</scope>
</reference>
<sequence length="1329" mass="146663">MSQEYIEDKEVTLTKLSSGRRLLEALLILIVLFAVWLMAALLSFNPSDPSWSQTAWHEPIHNLGGMPGAWLADTLFFIFGVMAYTIPVIIVGGCWFAWRHQSSDEYIDYFAVSLRIIGVLALILTSCGLAAINADDIWYFASGGVIGSLLSTTLQPLLHSSGGTIALLCVWAAGLTLFTGWSWVTIAEKLGGWILNILTFASNRTRRDDTWVDEDEYEDDEEYEDENHGKQHESRRARILRGALARRKRLAEKFINPMGRQTDAALFSGKRMDDDEEITYTARGVAADPDDVLFSGNRATQPEYDEYDPLLNGAPITEPVAVAAAATTATQSWAAPVEPVTQTPPVASVDVPPAQPTVAWQPVPGPQTGEPVIAPAPEGYPQQSQYAQPAVQYNEPLQQPVQPQQPYYAPAAEQPAQQPYYAPAPEQPVAGNAWQAEEQQSTFAPQSTYQTEQTYQQPAAQEPLYQQPQPVEQQPVVEPEPVVEETKPARPPLYYFEEVEEKRAREREQLAAWYQPIPEPVKEPEPIKSSLKAPSVAAVPPVEAAAAVSPLASGVKKATLATGAAATVAAPVFSLANSGGPRPQVKEGIGPQLPRPKRIRVPTRRELASYGIKLPSQRAAEEKAREAQRNQYDSGDQYNDDEIDAMQQDELARQFAQTQQQRYGEQYQHDVPVNAEDADAAAEAELARQFAQTQQQRYSGEQPAGANPFSLDDFEFSPMKALLDDGPHEPLFTPIVEPVQQPQQPVAPQQQYQQPQQPVPPQPQYQQPQQPVAPQPQYQQPQQPVAPQQQYQQPQQPVAPQQQYQQPQQPVAPQPQDTLLHPLLMRNGDSRPLHKPTTPLPSLDLLTPPPSEVEPVDTFALEQMARLVEARLADFRIKADVVNYSPGPVITRFELNLAPGVKAARISNLSRDLARSLSTVAVRVVEVIPGKPYVGLELPNKKRQTVYLREVLDNAKFRDNPSPLTVVLGKDIAGEPVVADLAKMPHLLVAGTTGSGKSVGVNAMILSMLYKAQPEDVRFIMIDPKMLELSVYEGIPHLLTEVVTDMKDAANALRWCVNEMERRYKLMSALGVRNLAGYNEKIAEADRMMRPIPDPYWKPGDSMDAQHPVLKKEPYIVVLVDEFADLMMTVGKKVEELIARLAQKARAAGIHLVLATQRPSVDVITGLIKANIPTRIAFTVSSKIDSRTILDQAGAESLLGMGDMLYSGPNSTLPVRVHGAFVRDQEVHAVVQDWKARGRPQYVDGITSDSESEGGAGGFDGAEELDPLFDQAVQFVTEKRKASISGVQRQFRIGYNRAARIIEQMEAQGIVSEQGHNGNREVLAPPPFD</sequence>
<accession>P46889</accession>
<accession>P77450</accession>
<comment type="function">
    <text evidence="4 5 7 9 12 14 15 16 18 20 21">Essential cell division protein that coordinates cell division and chromosome segregation. The N-terminus is involved in assembly of the cell-division machinery. The C-terminus functions as a DNA motor that moves dsDNA in an ATP-dependent manner towards the dif recombination site, which is located within the replication terminus region. Translocation stops specifically at Xer-dif sites, where FtsK interacts with the Xer recombinase, allowing activation of chromosome unlinking by recombination. FtsK orienting polar sequences (KOPS) guide the direction of DNA translocation. FtsK can remove proteins from DNA as it translocates, but translocation stops specifically at XerCD-dif site, thereby preventing removal of XerC and XerD from dif. Stoppage of translocation is accompanied by a reduction in ATPase activity. Also stimulates topoisomerase 4 activity. Required for the targeting of FtsQ, FtsL and FtsI to the septum.</text>
</comment>
<comment type="subunit">
    <text evidence="9 10 11 13">Homohexamer. Forms a ring that surrounds DNA. Interacts with FtsZ, FtsQ, FtsL and FtsI.</text>
</comment>
<comment type="interaction">
    <interactant intactId="EBI-550795">
        <id>P46889</id>
    </interactant>
    <interactant intactId="EBI-542683">
        <id>P0AFG8</id>
        <label>aceE</label>
    </interactant>
    <organismsDiffer>false</organismsDiffer>
    <experiments>2</experiments>
</comment>
<comment type="interaction">
    <interactant intactId="EBI-550795">
        <id>P46889</id>
    </interactant>
    <interactant intactId="EBI-1130157">
        <id>P06136</id>
        <label>ftsQ</label>
    </interactant>
    <organismsDiffer>false</organismsDiffer>
    <experiments>3</experiments>
</comment>
<comment type="subcellular location">
    <subcellularLocation>
        <location evidence="4 6 8 19 20">Cell inner membrane</location>
        <topology evidence="4 6 8 19 20">Multi-pass membrane protein</topology>
    </subcellularLocation>
    <text>Located at the septum. Colocalizes with FtsZ. ZipA, FtsZ and FtsA, but not FtsI and FtsQ are required to target it to the septum.</text>
</comment>
<comment type="induction">
    <text evidence="20">Induced by DNA-damaging agents.</text>
</comment>
<comment type="domain">
    <text evidence="7 9 14 17 18 21">Consists of an N-terminal domain, which is sufficient for the localization to the septal ring and is required for cell division, followed by a linker domain, and a C-terminal domain, which forms the translocation motor involved in chromosome segregation. The C-terminal domain can be further subdivided into alpha, beta and gamma subdomains. The alpha and beta subdomains multimerise to produce a hexameric ring, contain the nucleotide binding motif and form the DNA pump. The gamma subdomain is a regulatory subdomain that controls translocation of DNA by recognition of KOPS motifs and interacts with XerD recombinase.</text>
</comment>
<comment type="similarity">
    <text evidence="23">Belongs to the FtsK/SpoIIIE/SftA family.</text>
</comment>
<evidence type="ECO:0000255" key="1">
    <source>
        <dbReference type="PROSITE-ProRule" id="PRU00289"/>
    </source>
</evidence>
<evidence type="ECO:0000256" key="2">
    <source>
        <dbReference type="SAM" id="MobiDB-lite"/>
    </source>
</evidence>
<evidence type="ECO:0000269" key="3">
    <source>
    </source>
</evidence>
<evidence type="ECO:0000269" key="4">
    <source>
    </source>
</evidence>
<evidence type="ECO:0000269" key="5">
    <source>
    </source>
</evidence>
<evidence type="ECO:0000269" key="6">
    <source>
    </source>
</evidence>
<evidence type="ECO:0000269" key="7">
    <source>
    </source>
</evidence>
<evidence type="ECO:0000269" key="8">
    <source>
    </source>
</evidence>
<evidence type="ECO:0000269" key="9">
    <source>
    </source>
</evidence>
<evidence type="ECO:0000269" key="10">
    <source>
    </source>
</evidence>
<evidence type="ECO:0000269" key="11">
    <source>
    </source>
</evidence>
<evidence type="ECO:0000269" key="12">
    <source>
    </source>
</evidence>
<evidence type="ECO:0000269" key="13">
    <source>
    </source>
</evidence>
<evidence type="ECO:0000269" key="14">
    <source>
    </source>
</evidence>
<evidence type="ECO:0000269" key="15">
    <source>
    </source>
</evidence>
<evidence type="ECO:0000269" key="16">
    <source>
    </source>
</evidence>
<evidence type="ECO:0000269" key="17">
    <source>
    </source>
</evidence>
<evidence type="ECO:0000269" key="18">
    <source>
    </source>
</evidence>
<evidence type="ECO:0000269" key="19">
    <source>
    </source>
</evidence>
<evidence type="ECO:0000269" key="20">
    <source>
    </source>
</evidence>
<evidence type="ECO:0000269" key="21">
    <source>
    </source>
</evidence>
<evidence type="ECO:0000303" key="22">
    <source>
    </source>
</evidence>
<evidence type="ECO:0000305" key="23"/>
<evidence type="ECO:0007829" key="24">
    <source>
        <dbReference type="PDB" id="2IUS"/>
    </source>
</evidence>
<evidence type="ECO:0007829" key="25">
    <source>
        <dbReference type="PDB" id="2J5P"/>
    </source>
</evidence>
<organism>
    <name type="scientific">Escherichia coli (strain K12)</name>
    <dbReference type="NCBI Taxonomy" id="83333"/>
    <lineage>
        <taxon>Bacteria</taxon>
        <taxon>Pseudomonadati</taxon>
        <taxon>Pseudomonadota</taxon>
        <taxon>Gammaproteobacteria</taxon>
        <taxon>Enterobacterales</taxon>
        <taxon>Enterobacteriaceae</taxon>
        <taxon>Escherichia</taxon>
    </lineage>
</organism>
<feature type="chain" id="PRO_0000098257" description="DNA translocase FtsK">
    <location>
        <begin position="1"/>
        <end position="1329"/>
    </location>
</feature>
<feature type="topological domain" description="Cytoplasmic" evidence="19">
    <location>
        <begin position="1"/>
        <end position="24"/>
    </location>
</feature>
<feature type="transmembrane region" description="Helical" evidence="22">
    <location>
        <begin position="25"/>
        <end position="44"/>
    </location>
</feature>
<feature type="topological domain" description="Periplasmic" evidence="19">
    <location>
        <begin position="45"/>
        <end position="74"/>
    </location>
</feature>
<feature type="transmembrane region" description="Helical" evidence="22">
    <location>
        <begin position="75"/>
        <end position="98"/>
    </location>
</feature>
<feature type="topological domain" description="Cytoplasmic" evidence="19">
    <location>
        <begin position="99"/>
        <end position="115"/>
    </location>
</feature>
<feature type="transmembrane region" description="Helical" evidence="22">
    <location>
        <begin position="116"/>
        <end position="132"/>
    </location>
</feature>
<feature type="topological domain" description="Periplasmic" evidence="19">
    <location>
        <begin position="133"/>
        <end position="162"/>
    </location>
</feature>
<feature type="transmembrane region" description="Helical" evidence="22">
    <location>
        <begin position="163"/>
        <end position="179"/>
    </location>
</feature>
<feature type="topological domain" description="Cytoplasmic" evidence="19">
    <location>
        <begin position="180"/>
        <end position="1329"/>
    </location>
</feature>
<feature type="domain" description="FtsK" evidence="1">
    <location>
        <begin position="974"/>
        <end position="1187"/>
    </location>
</feature>
<feature type="region of interest" description="Linker">
    <location>
        <begin position="184"/>
        <end position="817"/>
    </location>
</feature>
<feature type="region of interest" description="Disordered" evidence="2">
    <location>
        <begin position="351"/>
        <end position="386"/>
    </location>
</feature>
<feature type="region of interest" description="Disordered" evidence="2">
    <location>
        <begin position="434"/>
        <end position="489"/>
    </location>
</feature>
<feature type="region of interest" description="Disordered" evidence="2">
    <location>
        <begin position="577"/>
        <end position="596"/>
    </location>
</feature>
<feature type="region of interest" description="Disordered" evidence="2">
    <location>
        <begin position="604"/>
        <end position="639"/>
    </location>
</feature>
<feature type="region of interest" description="Disordered" evidence="2">
    <location>
        <begin position="688"/>
        <end position="712"/>
    </location>
</feature>
<feature type="region of interest" description="Disordered" evidence="2">
    <location>
        <begin position="741"/>
        <end position="849"/>
    </location>
</feature>
<feature type="region of interest" description="Alpha">
    <location>
        <begin position="818"/>
        <end position="943"/>
    </location>
</feature>
<feature type="region of interest" description="Beta">
    <location>
        <begin position="944"/>
        <end position="1258"/>
    </location>
</feature>
<feature type="region of interest" description="Gamma">
    <location>
        <begin position="1259"/>
        <end position="1329"/>
    </location>
</feature>
<feature type="compositionally biased region" description="Polar residues" evidence="2">
    <location>
        <begin position="437"/>
        <end position="448"/>
    </location>
</feature>
<feature type="compositionally biased region" description="Low complexity" evidence="2">
    <location>
        <begin position="449"/>
        <end position="480"/>
    </location>
</feature>
<feature type="compositionally biased region" description="Basic and acidic residues" evidence="2">
    <location>
        <begin position="619"/>
        <end position="628"/>
    </location>
</feature>
<feature type="compositionally biased region" description="Polar residues" evidence="2">
    <location>
        <begin position="690"/>
        <end position="699"/>
    </location>
</feature>
<feature type="compositionally biased region" description="Low complexity" evidence="2">
    <location>
        <begin position="741"/>
        <end position="756"/>
    </location>
</feature>
<feature type="compositionally biased region" description="Low complexity" evidence="2">
    <location>
        <begin position="764"/>
        <end position="816"/>
    </location>
</feature>
<feature type="compositionally biased region" description="Low complexity" evidence="2">
    <location>
        <begin position="836"/>
        <end position="846"/>
    </location>
</feature>
<feature type="binding site" evidence="1">
    <location>
        <begin position="994"/>
        <end position="999"/>
    </location>
    <ligand>
        <name>ATP</name>
        <dbReference type="ChEBI" id="CHEBI:30616"/>
    </ligand>
</feature>
<feature type="mutagenesis site" description="Loss of function." evidence="3">
    <original>E</original>
    <variation>A</variation>
    <location>
        <position position="58"/>
    </location>
</feature>
<feature type="mutagenesis site" description="In Toe44; loss of function under extreme conditions.">
    <original>G</original>
    <variation>A</variation>
    <location>
        <position position="80"/>
    </location>
</feature>
<feature type="mutagenesis site" description="Impairs the ability of FtsK to function in cell division. Uncouples invagination of the inner and outer membranes and results in cellular voids." evidence="19">
    <original>D</original>
    <variation>C</variation>
    <location>
        <position position="135"/>
    </location>
</feature>
<feature type="mutagenesis site" description="Impairs the ability of FtsK to function in cell division. Uncouples invagination of the inner and outer membranes and results in cellular voids." evidence="19">
    <original>D</original>
    <variation>C</variation>
    <location>
        <position position="136"/>
    </location>
</feature>
<feature type="mutagenesis site" description="Impairs the ability of FtsK to function in cell division. Uncouples invagination of the inner and outer membranes and results in cellular voids." evidence="19">
    <original>I</original>
    <variation>C</variation>
    <location>
        <position position="137"/>
    </location>
</feature>
<feature type="mutagenesis site" description="Impairs the ability of FtsK to function in cell division. Uncouples invagination of the inner and outer membranes and results in cellular voids." evidence="19">
    <original>W</original>
    <variation>C</variation>
    <location>
        <position position="138"/>
    </location>
</feature>
<feature type="mutagenesis site" description="Does not activate Xer recombination." evidence="7">
    <original>K</original>
    <variation>A</variation>
    <location>
        <position position="997"/>
    </location>
</feature>
<feature type="sequence conflict" description="In Ref. 1; CAA90178." evidence="23" ref="1">
    <original>WA</original>
    <variation>CV</variation>
    <location>
        <begin position="333"/>
        <end position="334"/>
    </location>
</feature>
<feature type="sequence conflict" description="In Ref. 1; CAA90178." evidence="23" ref="1">
    <original>QP</original>
    <variation>HA</variation>
    <location>
        <begin position="388"/>
        <end position="389"/>
    </location>
</feature>
<feature type="sequence conflict" description="In Ref. 1; CAA90178." evidence="23" ref="1">
    <original>DSM</original>
    <variation>GQY</variation>
    <location>
        <begin position="1101"/>
        <end position="1103"/>
    </location>
</feature>
<feature type="sequence conflict" description="In Ref. 1; CAA90178." evidence="23" ref="1">
    <original>A</original>
    <variation>R</variation>
    <location>
        <position position="1193"/>
    </location>
</feature>
<feature type="helix" evidence="24">
    <location>
        <begin position="843"/>
        <end position="845"/>
    </location>
</feature>
<feature type="helix" evidence="24">
    <location>
        <begin position="859"/>
        <end position="872"/>
    </location>
</feature>
<feature type="turn" evidence="24">
    <location>
        <begin position="873"/>
        <end position="876"/>
    </location>
</feature>
<feature type="strand" evidence="24">
    <location>
        <begin position="879"/>
        <end position="886"/>
    </location>
</feature>
<feature type="strand" evidence="24">
    <location>
        <begin position="888"/>
        <end position="897"/>
    </location>
</feature>
<feature type="helix" evidence="24">
    <location>
        <begin position="904"/>
        <end position="907"/>
    </location>
</feature>
<feature type="helix" evidence="24">
    <location>
        <begin position="910"/>
        <end position="916"/>
    </location>
</feature>
<feature type="strand" evidence="24">
    <location>
        <begin position="923"/>
        <end position="926"/>
    </location>
</feature>
<feature type="strand" evidence="24">
    <location>
        <begin position="931"/>
        <end position="939"/>
    </location>
</feature>
<feature type="helix" evidence="24">
    <location>
        <begin position="948"/>
        <end position="952"/>
    </location>
</feature>
<feature type="helix" evidence="24">
    <location>
        <begin position="955"/>
        <end position="958"/>
    </location>
</feature>
<feature type="strand" evidence="24">
    <location>
        <begin position="965"/>
        <end position="971"/>
    </location>
</feature>
<feature type="strand" evidence="24">
    <location>
        <begin position="976"/>
        <end position="980"/>
    </location>
</feature>
<feature type="helix" evidence="24">
    <location>
        <begin position="981"/>
        <end position="983"/>
    </location>
</feature>
<feature type="strand" evidence="24">
    <location>
        <begin position="986"/>
        <end position="990"/>
    </location>
</feature>
<feature type="helix" evidence="24">
    <location>
        <begin position="997"/>
        <end position="1009"/>
    </location>
</feature>
<feature type="turn" evidence="24">
    <location>
        <begin position="1014"/>
        <end position="1016"/>
    </location>
</feature>
<feature type="strand" evidence="24">
    <location>
        <begin position="1017"/>
        <end position="1022"/>
    </location>
</feature>
<feature type="strand" evidence="24">
    <location>
        <begin position="1025"/>
        <end position="1027"/>
    </location>
</feature>
<feature type="helix" evidence="24">
    <location>
        <begin position="1028"/>
        <end position="1032"/>
    </location>
</feature>
<feature type="strand" evidence="24">
    <location>
        <begin position="1038"/>
        <end position="1041"/>
    </location>
</feature>
<feature type="helix" evidence="24">
    <location>
        <begin position="1046"/>
        <end position="1069"/>
    </location>
</feature>
<feature type="helix" evidence="24">
    <location>
        <begin position="1075"/>
        <end position="1087"/>
    </location>
</feature>
<feature type="strand" evidence="24">
    <location>
        <begin position="1115"/>
        <end position="1121"/>
    </location>
</feature>
<feature type="helix" evidence="24">
    <location>
        <begin position="1123"/>
        <end position="1144"/>
    </location>
</feature>
<feature type="helix" evidence="24">
    <location>
        <begin position="1146"/>
        <end position="1148"/>
    </location>
</feature>
<feature type="strand" evidence="24">
    <location>
        <begin position="1150"/>
        <end position="1157"/>
    </location>
</feature>
<feature type="turn" evidence="24">
    <location>
        <begin position="1161"/>
        <end position="1163"/>
    </location>
</feature>
<feature type="helix" evidence="24">
    <location>
        <begin position="1166"/>
        <end position="1171"/>
    </location>
</feature>
<feature type="strand" evidence="24">
    <location>
        <begin position="1174"/>
        <end position="1178"/>
    </location>
</feature>
<feature type="helix" evidence="24">
    <location>
        <begin position="1183"/>
        <end position="1190"/>
    </location>
</feature>
<feature type="strand" evidence="24">
    <location>
        <begin position="1191"/>
        <end position="1193"/>
    </location>
</feature>
<feature type="helix" evidence="24">
    <location>
        <begin position="1195"/>
        <end position="1197"/>
    </location>
</feature>
<feature type="strand" evidence="24">
    <location>
        <begin position="1203"/>
        <end position="1207"/>
    </location>
</feature>
<feature type="strand" evidence="24">
    <location>
        <begin position="1215"/>
        <end position="1219"/>
    </location>
</feature>
<feature type="helix" evidence="24">
    <location>
        <begin position="1224"/>
        <end position="1235"/>
    </location>
</feature>
<feature type="turn" evidence="25">
    <location>
        <begin position="1262"/>
        <end position="1264"/>
    </location>
</feature>
<feature type="helix" evidence="25">
    <location>
        <begin position="1269"/>
        <end position="1278"/>
    </location>
</feature>
<feature type="strand" evidence="25">
    <location>
        <begin position="1281"/>
        <end position="1283"/>
    </location>
</feature>
<feature type="helix" evidence="25">
    <location>
        <begin position="1284"/>
        <end position="1291"/>
    </location>
</feature>
<feature type="helix" evidence="25">
    <location>
        <begin position="1295"/>
        <end position="1308"/>
    </location>
</feature>
<feature type="strand" evidence="25">
    <location>
        <begin position="1316"/>
        <end position="1322"/>
    </location>
</feature>